<gene>
    <name evidence="4" type="primary">SHISAL1</name>
    <name type="synonym">KIAA1644</name>
</gene>
<sequence>MTSCGQQSLNVLAVLFSLLFSAVLSAHFRVCEPYTDHKGRYHFGFHCPRLSDNKTFILCCHHNNTVFKYCCNETEFQAVMQANLTASSEGYMHNNYTALLGVWIYGFFVLMLLVLDLLYYSAMNYDICKVYLARWGIQGRWMKQDPRRWGNPARAPRPGQRAPQPQPPPGPLPQAPQAVHTLRGDAHSPPLMTFQSSSA</sequence>
<comment type="interaction">
    <interactant intactId="EBI-18037857">
        <id>Q3SXP7</id>
    </interactant>
    <interactant intactId="EBI-13064220">
        <id>Q5BKT4</id>
        <label>ALG10</label>
    </interactant>
    <organismsDiffer>false</organismsDiffer>
    <experiments>3</experiments>
</comment>
<comment type="interaction">
    <interactant intactId="EBI-18037857">
        <id>Q3SXP7</id>
    </interactant>
    <interactant intactId="EBI-18075734">
        <id>Q5I7T1</id>
        <label>ALG10B</label>
    </interactant>
    <organismsDiffer>false</organismsDiffer>
    <experiments>3</experiments>
</comment>
<comment type="interaction">
    <interactant intactId="EBI-18037857">
        <id>Q3SXP7</id>
    </interactant>
    <interactant intactId="EBI-12092171">
        <id>Q12797-6</id>
        <label>ASPH</label>
    </interactant>
    <organismsDiffer>false</organismsDiffer>
    <experiments>3</experiments>
</comment>
<comment type="interaction">
    <interactant intactId="EBI-18037857">
        <id>Q3SXP7</id>
    </interactant>
    <interactant intactId="EBI-12003442">
        <id>Q8WVX3-2</id>
        <label>C4orf3</label>
    </interactant>
    <organismsDiffer>false</organismsDiffer>
    <experiments>3</experiments>
</comment>
<comment type="interaction">
    <interactant intactId="EBI-18037857">
        <id>Q3SXP7</id>
    </interactant>
    <interactant intactId="EBI-10269179">
        <id>Q8NBI2</id>
        <label>CYB561A3</label>
    </interactant>
    <organismsDiffer>false</organismsDiffer>
    <experiments>3</experiments>
</comment>
<comment type="interaction">
    <interactant intactId="EBI-18037857">
        <id>Q3SXP7</id>
    </interactant>
    <interactant intactId="EBI-6166686">
        <id>Q96F15</id>
        <label>GIMAP5</label>
    </interactant>
    <organismsDiffer>false</organismsDiffer>
    <experiments>3</experiments>
</comment>
<comment type="interaction">
    <interactant intactId="EBI-18037857">
        <id>Q3SXP7</id>
    </interactant>
    <interactant intactId="EBI-3905204">
        <id>P29033</id>
        <label>GJB2</label>
    </interactant>
    <organismsDiffer>false</organismsDiffer>
    <experiments>3</experiments>
</comment>
<comment type="interaction">
    <interactant intactId="EBI-18037857">
        <id>Q3SXP7</id>
    </interactant>
    <interactant intactId="EBI-11955647">
        <id>Q8TDV0</id>
        <label>GPR151</label>
    </interactant>
    <organismsDiffer>false</organismsDiffer>
    <experiments>3</experiments>
</comment>
<comment type="interaction">
    <interactant intactId="EBI-18037857">
        <id>Q3SXP7</id>
    </interactant>
    <interactant intactId="EBI-10178951">
        <id>O00155</id>
        <label>GPR25</label>
    </interactant>
    <organismsDiffer>false</organismsDiffer>
    <experiments>3</experiments>
</comment>
<comment type="interaction">
    <interactant intactId="EBI-18037857">
        <id>Q3SXP7</id>
    </interactant>
    <interactant intactId="EBI-7797098">
        <id>P04921</id>
        <label>GYPC</label>
    </interactant>
    <organismsDiffer>false</organismsDiffer>
    <experiments>3</experiments>
</comment>
<comment type="interaction">
    <interactant intactId="EBI-18037857">
        <id>Q3SXP7</id>
    </interactant>
    <interactant intactId="EBI-12033434">
        <id>Q9UBY5</id>
        <label>LPAR3</label>
    </interactant>
    <organismsDiffer>false</organismsDiffer>
    <experiments>3</experiments>
</comment>
<comment type="interaction">
    <interactant intactId="EBI-18037857">
        <id>Q3SXP7</id>
    </interactant>
    <interactant intactId="EBI-11956541">
        <id>Q9GZY8-5</id>
        <label>MFF</label>
    </interactant>
    <organismsDiffer>false</organismsDiffer>
    <experiments>3</experiments>
</comment>
<comment type="interaction">
    <interactant intactId="EBI-18037857">
        <id>Q3SXP7</id>
    </interactant>
    <interactant intactId="EBI-3920969">
        <id>Q6N075</id>
        <label>MFSD5</label>
    </interactant>
    <organismsDiffer>false</organismsDiffer>
    <experiments>3</experiments>
</comment>
<comment type="interaction">
    <interactant intactId="EBI-18037857">
        <id>Q3SXP7</id>
    </interactant>
    <interactant intactId="EBI-2858252">
        <id>Q6ZSS7</id>
        <label>MFSD6</label>
    </interactant>
    <organismsDiffer>false</organismsDiffer>
    <experiments>3</experiments>
</comment>
<comment type="interaction">
    <interactant intactId="EBI-18037857">
        <id>Q3SXP7</id>
    </interactant>
    <interactant intactId="EBI-11721828">
        <id>Q8IY26</id>
        <label>PLPP6</label>
    </interactant>
    <organismsDiffer>false</organismsDiffer>
    <experiments>3</experiments>
</comment>
<comment type="interaction">
    <interactant intactId="EBI-18037857">
        <id>Q3SXP7</id>
    </interactant>
    <interactant intactId="EBI-2845982">
        <id>Q01453</id>
        <label>PMP22</label>
    </interactant>
    <organismsDiffer>false</organismsDiffer>
    <experiments>3</experiments>
</comment>
<comment type="interaction">
    <interactant intactId="EBI-18037857">
        <id>Q3SXP7</id>
    </interactant>
    <interactant intactId="EBI-2695784">
        <id>Q8TAC9</id>
        <label>SCAMP5</label>
    </interactant>
    <organismsDiffer>false</organismsDiffer>
    <experiments>3</experiments>
</comment>
<comment type="interaction">
    <interactant intactId="EBI-18037857">
        <id>Q3SXP7</id>
    </interactant>
    <interactant intactId="EBI-12243266">
        <id>Q7RTY0</id>
        <label>SLC16A13</label>
    </interactant>
    <organismsDiffer>false</organismsDiffer>
    <experiments>3</experiments>
</comment>
<comment type="interaction">
    <interactant intactId="EBI-18037857">
        <id>Q3SXP7</id>
    </interactant>
    <interactant intactId="EBI-1054782">
        <id>Q8TB61</id>
        <label>SLC35B2</label>
    </interactant>
    <organismsDiffer>false</organismsDiffer>
    <experiments>3</experiments>
</comment>
<comment type="interaction">
    <interactant intactId="EBI-18037857">
        <id>Q3SXP7</id>
    </interactant>
    <interactant intactId="EBI-10314552">
        <id>Q9NVC3</id>
        <label>SLC38A7</label>
    </interactant>
    <organismsDiffer>false</organismsDiffer>
    <experiments>3</experiments>
</comment>
<comment type="interaction">
    <interactant intactId="EBI-18037857">
        <id>Q3SXP7</id>
    </interactant>
    <interactant intactId="EBI-1051105">
        <id>Q92504</id>
        <label>SLC39A7</label>
    </interactant>
    <organismsDiffer>false</organismsDiffer>
    <experiments>3</experiments>
</comment>
<comment type="interaction">
    <interactant intactId="EBI-18037857">
        <id>Q3SXP7</id>
    </interactant>
    <interactant intactId="EBI-10290130">
        <id>Q96JW4</id>
        <label>SLC41A2</label>
    </interactant>
    <organismsDiffer>false</organismsDiffer>
    <experiments>3</experiments>
</comment>
<comment type="interaction">
    <interactant intactId="EBI-18037857">
        <id>Q3SXP7</id>
    </interactant>
    <interactant intactId="EBI-12904614">
        <id>Q9NWF4</id>
        <label>SLC52A1</label>
    </interactant>
    <organismsDiffer>false</organismsDiffer>
    <experiments>3</experiments>
</comment>
<comment type="interaction">
    <interactant intactId="EBI-18037857">
        <id>Q3SXP7</id>
    </interactant>
    <interactant intactId="EBI-10694905">
        <id>Q5BJH2-2</id>
        <label>TMEM128</label>
    </interactant>
    <organismsDiffer>false</organismsDiffer>
    <experiments>3</experiments>
</comment>
<comment type="interaction">
    <interactant intactId="EBI-18037857">
        <id>Q3SXP7</id>
    </interactant>
    <interactant intactId="EBI-2844246">
        <id>Q9NV12</id>
        <label>TMEM140</label>
    </interactant>
    <organismsDiffer>false</organismsDiffer>
    <experiments>3</experiments>
</comment>
<comment type="interaction">
    <interactant intactId="EBI-18037857">
        <id>Q3SXP7</id>
    </interactant>
    <interactant intactId="EBI-17180389">
        <id>E9PQX1</id>
        <label>TMEM262</label>
    </interactant>
    <organismsDiffer>false</organismsDiffer>
    <experiments>3</experiments>
</comment>
<comment type="interaction">
    <interactant intactId="EBI-18037857">
        <id>Q3SXP7</id>
    </interactant>
    <interactant intactId="EBI-12038591">
        <id>Q69YG0</id>
        <label>TMEM42</label>
    </interactant>
    <organismsDiffer>false</organismsDiffer>
    <experiments>3</experiments>
</comment>
<comment type="interaction">
    <interactant intactId="EBI-18037857">
        <id>Q3SXP7</id>
    </interactant>
    <interactant intactId="EBI-718439">
        <id>O95159</id>
        <label>ZFPL1</label>
    </interactant>
    <organismsDiffer>false</organismsDiffer>
    <experiments>3</experiments>
</comment>
<comment type="subcellular location">
    <subcellularLocation>
        <location evidence="3">Membrane</location>
        <topology evidence="3">Single-pass type I membrane protein</topology>
    </subcellularLocation>
</comment>
<comment type="similarity">
    <text evidence="3">Belongs to the shisa family.</text>
</comment>
<name>SHSL1_HUMAN</name>
<feature type="signal peptide" evidence="1">
    <location>
        <begin position="1"/>
        <end position="25"/>
    </location>
</feature>
<feature type="chain" id="PRO_0000318951" description="Protein shisa-like-1">
    <location>
        <begin position="26"/>
        <end position="199"/>
    </location>
</feature>
<feature type="topological domain" description="Extracellular" evidence="1">
    <location>
        <begin position="26"/>
        <end position="97"/>
    </location>
</feature>
<feature type="transmembrane region" description="Helical" evidence="1">
    <location>
        <begin position="98"/>
        <end position="118"/>
    </location>
</feature>
<feature type="topological domain" description="Cytoplasmic" evidence="1">
    <location>
        <begin position="119"/>
        <end position="199"/>
    </location>
</feature>
<feature type="region of interest" description="Disordered" evidence="2">
    <location>
        <begin position="146"/>
        <end position="199"/>
    </location>
</feature>
<feature type="compositionally biased region" description="Low complexity" evidence="2">
    <location>
        <begin position="152"/>
        <end position="163"/>
    </location>
</feature>
<feature type="compositionally biased region" description="Pro residues" evidence="2">
    <location>
        <begin position="164"/>
        <end position="174"/>
    </location>
</feature>
<feature type="glycosylation site" description="N-linked (GlcNAc...) asparagine" evidence="1">
    <location>
        <position position="53"/>
    </location>
</feature>
<feature type="glycosylation site" description="N-linked (GlcNAc...) asparagine" evidence="1">
    <location>
        <position position="95"/>
    </location>
</feature>
<feature type="sequence conflict" description="In Ref. 2; AAI04185." evidence="3" ref="2">
    <original>S</original>
    <variation>L</variation>
    <location>
        <position position="197"/>
    </location>
</feature>
<protein>
    <recommendedName>
        <fullName evidence="4">Protein shisa-like-1</fullName>
    </recommendedName>
</protein>
<accession>Q3SXP7</accession>
<accession>A6NHP0</accession>
<accession>A9Z1Z0</accession>
<accession>Q3SXP8</accession>
<accession>Q5JZ71</accession>
<accession>Q9BYB5</accession>
<evidence type="ECO:0000255" key="1"/>
<evidence type="ECO:0000256" key="2">
    <source>
        <dbReference type="SAM" id="MobiDB-lite"/>
    </source>
</evidence>
<evidence type="ECO:0000305" key="3"/>
<evidence type="ECO:0000312" key="4">
    <source>
        <dbReference type="HGNC" id="HGNC:29335"/>
    </source>
</evidence>
<keyword id="KW-0325">Glycoprotein</keyword>
<keyword id="KW-0472">Membrane</keyword>
<keyword id="KW-1185">Reference proteome</keyword>
<keyword id="KW-0732">Signal</keyword>
<keyword id="KW-0812">Transmembrane</keyword>
<keyword id="KW-1133">Transmembrane helix</keyword>
<reference key="1">
    <citation type="journal article" date="1999" name="Nature">
        <title>The DNA sequence of human chromosome 22.</title>
        <authorList>
            <person name="Dunham I."/>
            <person name="Hunt A.R."/>
            <person name="Collins J.E."/>
            <person name="Bruskiewich R."/>
            <person name="Beare D.M."/>
            <person name="Clamp M."/>
            <person name="Smink L.J."/>
            <person name="Ainscough R."/>
            <person name="Almeida J.P."/>
            <person name="Babbage A.K."/>
            <person name="Bagguley C."/>
            <person name="Bailey J."/>
            <person name="Barlow K.F."/>
            <person name="Bates K.N."/>
            <person name="Beasley O.P."/>
            <person name="Bird C.P."/>
            <person name="Blakey S.E."/>
            <person name="Bridgeman A.M."/>
            <person name="Buck D."/>
            <person name="Burgess J."/>
            <person name="Burrill W.D."/>
            <person name="Burton J."/>
            <person name="Carder C."/>
            <person name="Carter N.P."/>
            <person name="Chen Y."/>
            <person name="Clark G."/>
            <person name="Clegg S.M."/>
            <person name="Cobley V.E."/>
            <person name="Cole C.G."/>
            <person name="Collier R.E."/>
            <person name="Connor R."/>
            <person name="Conroy D."/>
            <person name="Corby N.R."/>
            <person name="Coville G.J."/>
            <person name="Cox A.V."/>
            <person name="Davis J."/>
            <person name="Dawson E."/>
            <person name="Dhami P.D."/>
            <person name="Dockree C."/>
            <person name="Dodsworth S.J."/>
            <person name="Durbin R.M."/>
            <person name="Ellington A.G."/>
            <person name="Evans K.L."/>
            <person name="Fey J.M."/>
            <person name="Fleming K."/>
            <person name="French L."/>
            <person name="Garner A.A."/>
            <person name="Gilbert J.G.R."/>
            <person name="Goward M.E."/>
            <person name="Grafham D.V."/>
            <person name="Griffiths M.N.D."/>
            <person name="Hall C."/>
            <person name="Hall R.E."/>
            <person name="Hall-Tamlyn G."/>
            <person name="Heathcott R.W."/>
            <person name="Ho S."/>
            <person name="Holmes S."/>
            <person name="Hunt S.E."/>
            <person name="Jones M.C."/>
            <person name="Kershaw J."/>
            <person name="Kimberley A.M."/>
            <person name="King A."/>
            <person name="Laird G.K."/>
            <person name="Langford C.F."/>
            <person name="Leversha M.A."/>
            <person name="Lloyd C."/>
            <person name="Lloyd D.M."/>
            <person name="Martyn I.D."/>
            <person name="Mashreghi-Mohammadi M."/>
            <person name="Matthews L.H."/>
            <person name="Mccann O.T."/>
            <person name="Mcclay J."/>
            <person name="Mclaren S."/>
            <person name="McMurray A.A."/>
            <person name="Milne S.A."/>
            <person name="Mortimore B.J."/>
            <person name="Odell C.N."/>
            <person name="Pavitt R."/>
            <person name="Pearce A.V."/>
            <person name="Pearson D."/>
            <person name="Phillimore B.J.C.T."/>
            <person name="Phillips S.H."/>
            <person name="Plumb R.W."/>
            <person name="Ramsay H."/>
            <person name="Ramsey Y."/>
            <person name="Rogers L."/>
            <person name="Ross M.T."/>
            <person name="Scott C.E."/>
            <person name="Sehra H.K."/>
            <person name="Skuce C.D."/>
            <person name="Smalley S."/>
            <person name="Smith M.L."/>
            <person name="Soderlund C."/>
            <person name="Spragon L."/>
            <person name="Steward C.A."/>
            <person name="Sulston J.E."/>
            <person name="Swann R.M."/>
            <person name="Vaudin M."/>
            <person name="Wall M."/>
            <person name="Wallis J.M."/>
            <person name="Whiteley M.N."/>
            <person name="Willey D.L."/>
            <person name="Williams L."/>
            <person name="Williams S.A."/>
            <person name="Williamson H."/>
            <person name="Wilmer T.E."/>
            <person name="Wilming L."/>
            <person name="Wright C.L."/>
            <person name="Hubbard T."/>
            <person name="Bentley D.R."/>
            <person name="Beck S."/>
            <person name="Rogers J."/>
            <person name="Shimizu N."/>
            <person name="Minoshima S."/>
            <person name="Kawasaki K."/>
            <person name="Sasaki T."/>
            <person name="Asakawa S."/>
            <person name="Kudoh J."/>
            <person name="Shintani A."/>
            <person name="Shibuya K."/>
            <person name="Yoshizaki Y."/>
            <person name="Aoki N."/>
            <person name="Mitsuyama S."/>
            <person name="Roe B.A."/>
            <person name="Chen F."/>
            <person name="Chu L."/>
            <person name="Crabtree J."/>
            <person name="Deschamps S."/>
            <person name="Do A."/>
            <person name="Do T."/>
            <person name="Dorman A."/>
            <person name="Fang F."/>
            <person name="Fu Y."/>
            <person name="Hu P."/>
            <person name="Hua A."/>
            <person name="Kenton S."/>
            <person name="Lai H."/>
            <person name="Lao H.I."/>
            <person name="Lewis J."/>
            <person name="Lewis S."/>
            <person name="Lin S.-P."/>
            <person name="Loh P."/>
            <person name="Malaj E."/>
            <person name="Nguyen T."/>
            <person name="Pan H."/>
            <person name="Phan S."/>
            <person name="Qi S."/>
            <person name="Qian Y."/>
            <person name="Ray L."/>
            <person name="Ren Q."/>
            <person name="Shaull S."/>
            <person name="Sloan D."/>
            <person name="Song L."/>
            <person name="Wang Q."/>
            <person name="Wang Y."/>
            <person name="Wang Z."/>
            <person name="White J."/>
            <person name="Willingham D."/>
            <person name="Wu H."/>
            <person name="Yao Z."/>
            <person name="Zhan M."/>
            <person name="Zhang G."/>
            <person name="Chissoe S."/>
            <person name="Murray J."/>
            <person name="Miller N."/>
            <person name="Minx P."/>
            <person name="Fulton R."/>
            <person name="Johnson D."/>
            <person name="Bemis G."/>
            <person name="Bentley D."/>
            <person name="Bradshaw H."/>
            <person name="Bourne S."/>
            <person name="Cordes M."/>
            <person name="Du Z."/>
            <person name="Fulton L."/>
            <person name="Goela D."/>
            <person name="Graves T."/>
            <person name="Hawkins J."/>
            <person name="Hinds K."/>
            <person name="Kemp K."/>
            <person name="Latreille P."/>
            <person name="Layman D."/>
            <person name="Ozersky P."/>
            <person name="Rohlfing T."/>
            <person name="Scheet P."/>
            <person name="Walker C."/>
            <person name="Wamsley A."/>
            <person name="Wohldmann P."/>
            <person name="Pepin K."/>
            <person name="Nelson J."/>
            <person name="Korf I."/>
            <person name="Bedell J.A."/>
            <person name="Hillier L.W."/>
            <person name="Mardis E."/>
            <person name="Waterston R."/>
            <person name="Wilson R."/>
            <person name="Emanuel B.S."/>
            <person name="Shaikh T."/>
            <person name="Kurahashi H."/>
            <person name="Saitta S."/>
            <person name="Budarf M.L."/>
            <person name="McDermid H.E."/>
            <person name="Johnson A."/>
            <person name="Wong A.C.C."/>
            <person name="Morrow B.E."/>
            <person name="Edelmann L."/>
            <person name="Kim U.J."/>
            <person name="Shizuya H."/>
            <person name="Simon M.I."/>
            <person name="Dumanski J.P."/>
            <person name="Peyrard M."/>
            <person name="Kedra D."/>
            <person name="Seroussi E."/>
            <person name="Fransson I."/>
            <person name="Tapia I."/>
            <person name="Bruder C.E."/>
            <person name="O'Brien K.P."/>
            <person name="Wilkinson P."/>
            <person name="Bodenteich A."/>
            <person name="Hartman K."/>
            <person name="Hu X."/>
            <person name="Khan A.S."/>
            <person name="Lane L."/>
            <person name="Tilahun Y."/>
            <person name="Wright H."/>
        </authorList>
    </citation>
    <scope>NUCLEOTIDE SEQUENCE [LARGE SCALE GENOMIC DNA]</scope>
</reference>
<reference key="2">
    <citation type="journal article" date="2004" name="Genome Res.">
        <title>The status, quality, and expansion of the NIH full-length cDNA project: the Mammalian Gene Collection (MGC).</title>
        <authorList>
            <consortium name="The MGC Project Team"/>
        </authorList>
    </citation>
    <scope>NUCLEOTIDE SEQUENCE [LARGE SCALE MRNA]</scope>
</reference>
<reference key="3">
    <citation type="journal article" date="2001" name="DNA Res.">
        <title>Identification of novel transcribed sequences on human chromosome 22 by expressed sequence tag mapping.</title>
        <authorList>
            <person name="Hirosawa M."/>
            <person name="Nagase T."/>
            <person name="Murahashi Y."/>
            <person name="Kikuno R."/>
            <person name="Ohara O."/>
        </authorList>
    </citation>
    <scope>NUCLEOTIDE SEQUENCE [LARGE SCALE MRNA] OF 68-199</scope>
    <source>
        <tissue>Brain</tissue>
    </source>
</reference>
<organism>
    <name type="scientific">Homo sapiens</name>
    <name type="common">Human</name>
    <dbReference type="NCBI Taxonomy" id="9606"/>
    <lineage>
        <taxon>Eukaryota</taxon>
        <taxon>Metazoa</taxon>
        <taxon>Chordata</taxon>
        <taxon>Craniata</taxon>
        <taxon>Vertebrata</taxon>
        <taxon>Euteleostomi</taxon>
        <taxon>Mammalia</taxon>
        <taxon>Eutheria</taxon>
        <taxon>Euarchontoglires</taxon>
        <taxon>Primates</taxon>
        <taxon>Haplorrhini</taxon>
        <taxon>Catarrhini</taxon>
        <taxon>Hominidae</taxon>
        <taxon>Homo</taxon>
    </lineage>
</organism>
<proteinExistence type="evidence at protein level"/>
<dbReference type="EMBL" id="AL022339">
    <property type="status" value="NOT_ANNOTATED_CDS"/>
    <property type="molecule type" value="Genomic_DNA"/>
</dbReference>
<dbReference type="EMBL" id="AL591914">
    <property type="status" value="NOT_ANNOTATED_CDS"/>
    <property type="molecule type" value="Genomic_DNA"/>
</dbReference>
<dbReference type="EMBL" id="BC104183">
    <property type="protein sequence ID" value="AAI04184.1"/>
    <property type="molecule type" value="mRNA"/>
</dbReference>
<dbReference type="EMBL" id="BC104184">
    <property type="protein sequence ID" value="AAI04185.1"/>
    <property type="molecule type" value="mRNA"/>
</dbReference>
<dbReference type="EMBL" id="AB051431">
    <property type="protein sequence ID" value="BAB33314.1"/>
    <property type="molecule type" value="mRNA"/>
</dbReference>
<dbReference type="CCDS" id="CCDS43025.1"/>
<dbReference type="RefSeq" id="NP_001092764.1">
    <property type="nucleotide sequence ID" value="NM_001099294.2"/>
</dbReference>
<dbReference type="RefSeq" id="XP_005261847.1">
    <property type="nucleotide sequence ID" value="XM_005261790.4"/>
</dbReference>
<dbReference type="RefSeq" id="XP_054182033.1">
    <property type="nucleotide sequence ID" value="XM_054326058.1"/>
</dbReference>
<dbReference type="SMR" id="Q3SXP7"/>
<dbReference type="BioGRID" id="124484">
    <property type="interactions" value="67"/>
</dbReference>
<dbReference type="FunCoup" id="Q3SXP7">
    <property type="interactions" value="17"/>
</dbReference>
<dbReference type="IntAct" id="Q3SXP7">
    <property type="interactions" value="57"/>
</dbReference>
<dbReference type="STRING" id="9606.ENSP00000370568"/>
<dbReference type="GlyCosmos" id="Q3SXP7">
    <property type="glycosylation" value="2 sites, No reported glycans"/>
</dbReference>
<dbReference type="GlyGen" id="Q3SXP7">
    <property type="glycosylation" value="2 sites"/>
</dbReference>
<dbReference type="PhosphoSitePlus" id="Q3SXP7"/>
<dbReference type="BioMuta" id="KIAA1644"/>
<dbReference type="DMDM" id="172044643"/>
<dbReference type="MassIVE" id="Q3SXP7"/>
<dbReference type="PaxDb" id="9606-ENSP00000370568"/>
<dbReference type="PeptideAtlas" id="Q3SXP7"/>
<dbReference type="ProteomicsDB" id="61819"/>
<dbReference type="Antibodypedia" id="53815">
    <property type="antibodies" value="59 antibodies from 15 providers"/>
</dbReference>
<dbReference type="DNASU" id="85352"/>
<dbReference type="Ensembl" id="ENST00000381176.5">
    <property type="protein sequence ID" value="ENSP00000370568.4"/>
    <property type="gene ID" value="ENSG00000138944.8"/>
</dbReference>
<dbReference type="GeneID" id="85352"/>
<dbReference type="KEGG" id="hsa:85352"/>
<dbReference type="MANE-Select" id="ENST00000381176.5">
    <property type="protein sequence ID" value="ENSP00000370568.4"/>
    <property type="RefSeq nucleotide sequence ID" value="NM_001099294.2"/>
    <property type="RefSeq protein sequence ID" value="NP_001092764.1"/>
</dbReference>
<dbReference type="UCSC" id="uc003bet.3">
    <property type="organism name" value="human"/>
</dbReference>
<dbReference type="AGR" id="HGNC:29335"/>
<dbReference type="CTD" id="85352"/>
<dbReference type="DisGeNET" id="85352"/>
<dbReference type="GeneCards" id="SHISAL1"/>
<dbReference type="HGNC" id="HGNC:29335">
    <property type="gene designation" value="SHISAL1"/>
</dbReference>
<dbReference type="HPA" id="ENSG00000138944">
    <property type="expression patterns" value="Tissue enhanced (brain, endometrium, smooth muscle)"/>
</dbReference>
<dbReference type="MIM" id="620220">
    <property type="type" value="gene"/>
</dbReference>
<dbReference type="neXtProt" id="NX_Q3SXP7"/>
<dbReference type="OpenTargets" id="ENSG00000138944"/>
<dbReference type="PharmGKB" id="PA164721896"/>
<dbReference type="VEuPathDB" id="HostDB:ENSG00000138944"/>
<dbReference type="eggNOG" id="ENOG502R0N8">
    <property type="taxonomic scope" value="Eukaryota"/>
</dbReference>
<dbReference type="GeneTree" id="ENSGT00390000006791"/>
<dbReference type="HOGENOM" id="CLU_089343_0_0_1"/>
<dbReference type="InParanoid" id="Q3SXP7"/>
<dbReference type="OMA" id="ICRVYLA"/>
<dbReference type="OrthoDB" id="9941515at2759"/>
<dbReference type="PAN-GO" id="Q3SXP7">
    <property type="GO annotations" value="0 GO annotations based on evolutionary models"/>
</dbReference>
<dbReference type="PhylomeDB" id="Q3SXP7"/>
<dbReference type="TreeFam" id="TF331539"/>
<dbReference type="PathwayCommons" id="Q3SXP7"/>
<dbReference type="SignaLink" id="Q3SXP7"/>
<dbReference type="BioGRID-ORCS" id="85352">
    <property type="hits" value="12 hits in 1143 CRISPR screens"/>
</dbReference>
<dbReference type="ChiTaRS" id="KIAA1644">
    <property type="organism name" value="human"/>
</dbReference>
<dbReference type="GenomeRNAi" id="85352"/>
<dbReference type="Pharos" id="Q3SXP7">
    <property type="development level" value="Tdark"/>
</dbReference>
<dbReference type="PRO" id="PR:Q3SXP7"/>
<dbReference type="Proteomes" id="UP000005640">
    <property type="component" value="Chromosome 22"/>
</dbReference>
<dbReference type="RNAct" id="Q3SXP7">
    <property type="molecule type" value="protein"/>
</dbReference>
<dbReference type="Bgee" id="ENSG00000138944">
    <property type="expression patterns" value="Expressed in lateral nuclear group of thalamus and 149 other cell types or tissues"/>
</dbReference>
<dbReference type="GO" id="GO:0016020">
    <property type="term" value="C:membrane"/>
    <property type="evidence" value="ECO:0007669"/>
    <property type="project" value="UniProtKB-SubCell"/>
</dbReference>
<dbReference type="InterPro" id="IPR026910">
    <property type="entry name" value="Shisa"/>
</dbReference>
<dbReference type="InterPro" id="IPR053891">
    <property type="entry name" value="Shisa_N"/>
</dbReference>
<dbReference type="PANTHER" id="PTHR31395:SF11">
    <property type="entry name" value="PROTEIN SHISA-LIKE-1"/>
    <property type="match status" value="1"/>
</dbReference>
<dbReference type="PANTHER" id="PTHR31395">
    <property type="entry name" value="SHISA"/>
    <property type="match status" value="1"/>
</dbReference>
<dbReference type="Pfam" id="PF13908">
    <property type="entry name" value="Shisa_N"/>
    <property type="match status" value="1"/>
</dbReference>